<dbReference type="EMBL" id="CP000868">
    <property type="protein sequence ID" value="ABX15870.1"/>
    <property type="molecule type" value="Genomic_DNA"/>
</dbReference>
<dbReference type="EMBL" id="AP009385">
    <property type="protein sequence ID" value="BAG43000.1"/>
    <property type="molecule type" value="Genomic_DNA"/>
</dbReference>
<dbReference type="RefSeq" id="WP_006401275.1">
    <property type="nucleotide sequence ID" value="NC_010804.1"/>
</dbReference>
<dbReference type="SMR" id="A9ADF3"/>
<dbReference type="STRING" id="395019.BMULJ_01056"/>
<dbReference type="GeneID" id="93127277"/>
<dbReference type="KEGG" id="bmj:BMULJ_01056"/>
<dbReference type="KEGG" id="bmu:Bmul_2185"/>
<dbReference type="eggNOG" id="COG0333">
    <property type="taxonomic scope" value="Bacteria"/>
</dbReference>
<dbReference type="HOGENOM" id="CLU_129084_2_1_4"/>
<dbReference type="Proteomes" id="UP000008815">
    <property type="component" value="Chromosome 1"/>
</dbReference>
<dbReference type="GO" id="GO:0015934">
    <property type="term" value="C:large ribosomal subunit"/>
    <property type="evidence" value="ECO:0007669"/>
    <property type="project" value="InterPro"/>
</dbReference>
<dbReference type="GO" id="GO:0003735">
    <property type="term" value="F:structural constituent of ribosome"/>
    <property type="evidence" value="ECO:0007669"/>
    <property type="project" value="InterPro"/>
</dbReference>
<dbReference type="GO" id="GO:0006412">
    <property type="term" value="P:translation"/>
    <property type="evidence" value="ECO:0007669"/>
    <property type="project" value="UniProtKB-UniRule"/>
</dbReference>
<dbReference type="HAMAP" id="MF_00340">
    <property type="entry name" value="Ribosomal_bL32"/>
    <property type="match status" value="1"/>
</dbReference>
<dbReference type="InterPro" id="IPR002677">
    <property type="entry name" value="Ribosomal_bL32"/>
</dbReference>
<dbReference type="InterPro" id="IPR044957">
    <property type="entry name" value="Ribosomal_bL32_bact"/>
</dbReference>
<dbReference type="InterPro" id="IPR011332">
    <property type="entry name" value="Ribosomal_zn-bd"/>
</dbReference>
<dbReference type="NCBIfam" id="TIGR01031">
    <property type="entry name" value="rpmF_bact"/>
    <property type="match status" value="1"/>
</dbReference>
<dbReference type="PANTHER" id="PTHR35534">
    <property type="entry name" value="50S RIBOSOMAL PROTEIN L32"/>
    <property type="match status" value="1"/>
</dbReference>
<dbReference type="PANTHER" id="PTHR35534:SF1">
    <property type="entry name" value="LARGE RIBOSOMAL SUBUNIT PROTEIN BL32"/>
    <property type="match status" value="1"/>
</dbReference>
<dbReference type="Pfam" id="PF01783">
    <property type="entry name" value="Ribosomal_L32p"/>
    <property type="match status" value="1"/>
</dbReference>
<dbReference type="SUPFAM" id="SSF57829">
    <property type="entry name" value="Zn-binding ribosomal proteins"/>
    <property type="match status" value="1"/>
</dbReference>
<reference key="1">
    <citation type="submission" date="2007-10" db="EMBL/GenBank/DDBJ databases">
        <title>Complete sequence of chromosome 1 of Burkholderia multivorans ATCC 17616.</title>
        <authorList>
            <person name="Copeland A."/>
            <person name="Lucas S."/>
            <person name="Lapidus A."/>
            <person name="Barry K."/>
            <person name="Glavina del Rio T."/>
            <person name="Dalin E."/>
            <person name="Tice H."/>
            <person name="Pitluck S."/>
            <person name="Chain P."/>
            <person name="Malfatti S."/>
            <person name="Shin M."/>
            <person name="Vergez L."/>
            <person name="Schmutz J."/>
            <person name="Larimer F."/>
            <person name="Land M."/>
            <person name="Hauser L."/>
            <person name="Kyrpides N."/>
            <person name="Kim E."/>
            <person name="Tiedje J."/>
            <person name="Richardson P."/>
        </authorList>
    </citation>
    <scope>NUCLEOTIDE SEQUENCE [LARGE SCALE GENOMIC DNA]</scope>
    <source>
        <strain>ATCC 17616 / 249</strain>
    </source>
</reference>
<reference key="2">
    <citation type="submission" date="2007-04" db="EMBL/GenBank/DDBJ databases">
        <title>Complete genome sequence of Burkholderia multivorans ATCC 17616.</title>
        <authorList>
            <person name="Ohtsubo Y."/>
            <person name="Yamashita A."/>
            <person name="Kurokawa K."/>
            <person name="Takami H."/>
            <person name="Yuhara S."/>
            <person name="Nishiyama E."/>
            <person name="Endo R."/>
            <person name="Miyazaki R."/>
            <person name="Ono A."/>
            <person name="Yano K."/>
            <person name="Ito M."/>
            <person name="Sota M."/>
            <person name="Yuji N."/>
            <person name="Hattori M."/>
            <person name="Tsuda M."/>
        </authorList>
    </citation>
    <scope>NUCLEOTIDE SEQUENCE [LARGE SCALE GENOMIC DNA]</scope>
    <source>
        <strain>ATCC 17616 / 249</strain>
    </source>
</reference>
<sequence>MAVQQNKKSPSKRGMHRSHDFLTAAPLAVEPSTGEVHLRHHISPNGYYRGKKVVKTKND</sequence>
<name>RL32_BURM1</name>
<protein>
    <recommendedName>
        <fullName evidence="1">Large ribosomal subunit protein bL32</fullName>
    </recommendedName>
    <alternativeName>
        <fullName evidence="3">50S ribosomal protein L32</fullName>
    </alternativeName>
</protein>
<evidence type="ECO:0000255" key="1">
    <source>
        <dbReference type="HAMAP-Rule" id="MF_00340"/>
    </source>
</evidence>
<evidence type="ECO:0000256" key="2">
    <source>
        <dbReference type="SAM" id="MobiDB-lite"/>
    </source>
</evidence>
<evidence type="ECO:0000305" key="3"/>
<comment type="similarity">
    <text evidence="1">Belongs to the bacterial ribosomal protein bL32 family.</text>
</comment>
<gene>
    <name evidence="1" type="primary">rpmF</name>
    <name type="ordered locus">Bmul_2185</name>
    <name type="ordered locus">BMULJ_01056</name>
</gene>
<accession>A9ADF3</accession>
<keyword id="KW-1185">Reference proteome</keyword>
<keyword id="KW-0687">Ribonucleoprotein</keyword>
<keyword id="KW-0689">Ribosomal protein</keyword>
<feature type="chain" id="PRO_1000120099" description="Large ribosomal subunit protein bL32">
    <location>
        <begin position="1"/>
        <end position="59"/>
    </location>
</feature>
<feature type="region of interest" description="Disordered" evidence="2">
    <location>
        <begin position="1"/>
        <end position="23"/>
    </location>
</feature>
<proteinExistence type="inferred from homology"/>
<organism>
    <name type="scientific">Burkholderia multivorans (strain ATCC 17616 / 249)</name>
    <dbReference type="NCBI Taxonomy" id="395019"/>
    <lineage>
        <taxon>Bacteria</taxon>
        <taxon>Pseudomonadati</taxon>
        <taxon>Pseudomonadota</taxon>
        <taxon>Betaproteobacteria</taxon>
        <taxon>Burkholderiales</taxon>
        <taxon>Burkholderiaceae</taxon>
        <taxon>Burkholderia</taxon>
        <taxon>Burkholderia cepacia complex</taxon>
    </lineage>
</organism>